<gene>
    <name type="primary">gpatch11</name>
    <name type="synonym">ccdc75</name>
</gene>
<comment type="subcellular location">
    <subcellularLocation>
        <location evidence="1">Chromosome</location>
        <location evidence="1">Centromere</location>
        <location evidence="1">Kinetochore</location>
    </subcellularLocation>
</comment>
<comment type="similarity">
    <text evidence="5">Belongs to the GPATCH11 family.</text>
</comment>
<organism>
    <name type="scientific">Xenopus tropicalis</name>
    <name type="common">Western clawed frog</name>
    <name type="synonym">Silurana tropicalis</name>
    <dbReference type="NCBI Taxonomy" id="8364"/>
    <lineage>
        <taxon>Eukaryota</taxon>
        <taxon>Metazoa</taxon>
        <taxon>Chordata</taxon>
        <taxon>Craniata</taxon>
        <taxon>Vertebrata</taxon>
        <taxon>Euteleostomi</taxon>
        <taxon>Amphibia</taxon>
        <taxon>Batrachia</taxon>
        <taxon>Anura</taxon>
        <taxon>Pipoidea</taxon>
        <taxon>Pipidae</taxon>
        <taxon>Xenopodinae</taxon>
        <taxon>Xenopus</taxon>
        <taxon>Silurana</taxon>
    </lineage>
</organism>
<dbReference type="EMBL" id="BC076886">
    <property type="protein sequence ID" value="AAH76886.1"/>
    <property type="molecule type" value="mRNA"/>
</dbReference>
<dbReference type="RefSeq" id="NP_001005035.1">
    <property type="nucleotide sequence ID" value="NM_001005035.1"/>
</dbReference>
<dbReference type="FunCoup" id="Q6DF57">
    <property type="interactions" value="410"/>
</dbReference>
<dbReference type="STRING" id="8364.ENSXETP00000043161"/>
<dbReference type="PaxDb" id="8364-ENSXETP00000040135"/>
<dbReference type="DNASU" id="448554"/>
<dbReference type="GeneID" id="448554"/>
<dbReference type="KEGG" id="xtr:448554"/>
<dbReference type="AGR" id="Xenbase:XB-GENE-5921609"/>
<dbReference type="CTD" id="253635"/>
<dbReference type="Xenbase" id="XB-GENE-5921609">
    <property type="gene designation" value="gpatch11"/>
</dbReference>
<dbReference type="eggNOG" id="KOG1994">
    <property type="taxonomic scope" value="Eukaryota"/>
</dbReference>
<dbReference type="HOGENOM" id="CLU_046724_3_1_1"/>
<dbReference type="InParanoid" id="Q6DF57"/>
<dbReference type="OMA" id="DYMNMVI"/>
<dbReference type="OrthoDB" id="786951at2759"/>
<dbReference type="PhylomeDB" id="Q6DF57"/>
<dbReference type="TreeFam" id="TF313583"/>
<dbReference type="Proteomes" id="UP000008143">
    <property type="component" value="Chromosome 5"/>
</dbReference>
<dbReference type="Bgee" id="ENSXETG00000018544">
    <property type="expression patterns" value="Expressed in skeletal muscle tissue and 13 other cell types or tissues"/>
</dbReference>
<dbReference type="ExpressionAtlas" id="Q6DF57">
    <property type="expression patterns" value="baseline"/>
</dbReference>
<dbReference type="GO" id="GO:0000776">
    <property type="term" value="C:kinetochore"/>
    <property type="evidence" value="ECO:0000250"/>
    <property type="project" value="UniProtKB"/>
</dbReference>
<dbReference type="GO" id="GO:0003676">
    <property type="term" value="F:nucleic acid binding"/>
    <property type="evidence" value="ECO:0007669"/>
    <property type="project" value="InterPro"/>
</dbReference>
<dbReference type="InterPro" id="IPR025239">
    <property type="entry name" value="DUF4187"/>
</dbReference>
<dbReference type="InterPro" id="IPR000467">
    <property type="entry name" value="G_patch_dom"/>
</dbReference>
<dbReference type="InterPro" id="IPR039249">
    <property type="entry name" value="GPATCH11"/>
</dbReference>
<dbReference type="PANTHER" id="PTHR21032">
    <property type="entry name" value="G PATCH DOMAIN-CONTAINING PROTEIN 11"/>
    <property type="match status" value="1"/>
</dbReference>
<dbReference type="PANTHER" id="PTHR21032:SF0">
    <property type="entry name" value="G PATCH DOMAIN-CONTAINING PROTEIN 11"/>
    <property type="match status" value="1"/>
</dbReference>
<dbReference type="Pfam" id="PF13821">
    <property type="entry name" value="DUF4187"/>
    <property type="match status" value="1"/>
</dbReference>
<dbReference type="Pfam" id="PF01585">
    <property type="entry name" value="G-patch"/>
    <property type="match status" value="1"/>
</dbReference>
<dbReference type="SMART" id="SM01173">
    <property type="entry name" value="DUF4187"/>
    <property type="match status" value="1"/>
</dbReference>
<dbReference type="SMART" id="SM00443">
    <property type="entry name" value="G_patch"/>
    <property type="match status" value="1"/>
</dbReference>
<dbReference type="PROSITE" id="PS50174">
    <property type="entry name" value="G_PATCH"/>
    <property type="match status" value="1"/>
</dbReference>
<reference key="1">
    <citation type="submission" date="2004-07" db="EMBL/GenBank/DDBJ databases">
        <authorList>
            <consortium name="NIH - Xenopus Gene Collection (XGC) project"/>
        </authorList>
    </citation>
    <scope>NUCLEOTIDE SEQUENCE [LARGE SCALE MRNA]</scope>
</reference>
<evidence type="ECO:0000250" key="1">
    <source>
        <dbReference type="UniProtKB" id="Q8N954"/>
    </source>
</evidence>
<evidence type="ECO:0000255" key="2"/>
<evidence type="ECO:0000255" key="3">
    <source>
        <dbReference type="PROSITE-ProRule" id="PRU00092"/>
    </source>
</evidence>
<evidence type="ECO:0000256" key="4">
    <source>
        <dbReference type="SAM" id="MobiDB-lite"/>
    </source>
</evidence>
<evidence type="ECO:0000305" key="5"/>
<proteinExistence type="evidence at transcript level"/>
<keyword id="KW-0137">Centromere</keyword>
<keyword id="KW-0158">Chromosome</keyword>
<keyword id="KW-0175">Coiled coil</keyword>
<keyword id="KW-0995">Kinetochore</keyword>
<keyword id="KW-1185">Reference proteome</keyword>
<accession>Q6DF57</accession>
<feature type="chain" id="PRO_0000279755" description="G patch domain-containing protein 11">
    <location>
        <begin position="1"/>
        <end position="261"/>
    </location>
</feature>
<feature type="domain" description="G-patch" evidence="3">
    <location>
        <begin position="70"/>
        <end position="116"/>
    </location>
</feature>
<feature type="region of interest" description="Disordered" evidence="4">
    <location>
        <begin position="1"/>
        <end position="67"/>
    </location>
</feature>
<feature type="region of interest" description="Disordered" evidence="4">
    <location>
        <begin position="88"/>
        <end position="124"/>
    </location>
</feature>
<feature type="region of interest" description="Disordered" evidence="4">
    <location>
        <begin position="184"/>
        <end position="213"/>
    </location>
</feature>
<feature type="coiled-coil region" evidence="2">
    <location>
        <begin position="31"/>
        <end position="65"/>
    </location>
</feature>
<feature type="coiled-coil region" evidence="2">
    <location>
        <begin position="190"/>
        <end position="222"/>
    </location>
</feature>
<feature type="compositionally biased region" description="Basic and acidic residues" evidence="4">
    <location>
        <begin position="29"/>
        <end position="64"/>
    </location>
</feature>
<feature type="compositionally biased region" description="Basic and acidic residues" evidence="4">
    <location>
        <begin position="111"/>
        <end position="124"/>
    </location>
</feature>
<feature type="compositionally biased region" description="Acidic residues" evidence="4">
    <location>
        <begin position="194"/>
        <end position="213"/>
    </location>
</feature>
<protein>
    <recommendedName>
        <fullName>G patch domain-containing protein 11</fullName>
    </recommendedName>
    <alternativeName>
        <fullName>Coiled-coil domain-containing protein 75</fullName>
    </alternativeName>
</protein>
<sequence>MEEEEEDYMSDAFINSLQDVRPGMSMPRRVKECYEKEEKHKEANIKNRQQKLKDVEKEKRDTKLNEALGNENKGFALLQKMGYKKGQALGKKGDGIVEPIPLNIKTGRSGIGHEEMKKRKAEENLESYRRKIQMRKHDEEQAADDFRMRMKSKREEIRLKADLSKSQRACMLLDGQKSISTPREAWYWPKMNEQEADEEADEETEEDEDLVEEELSTLEKLQILTSYLRGRHLFCIWCGTTYQDDEDMESNCPGDTAEDHN</sequence>
<name>GPT11_XENTR</name>